<evidence type="ECO:0000255" key="1">
    <source>
        <dbReference type="HAMAP-Rule" id="MF_01274"/>
    </source>
</evidence>
<proteinExistence type="inferred from homology"/>
<reference key="1">
    <citation type="journal article" date="2012" name="BMC Genomics">
        <title>Comparative genomics and transcriptomics of lineages I, II, and III strains of Listeria monocytogenes.</title>
        <authorList>
            <person name="Hain T."/>
            <person name="Ghai R."/>
            <person name="Billion A."/>
            <person name="Kuenne C.T."/>
            <person name="Steinweg C."/>
            <person name="Izar B."/>
            <person name="Mohamed W."/>
            <person name="Mraheil M."/>
            <person name="Domann E."/>
            <person name="Schaffrath S."/>
            <person name="Karst U."/>
            <person name="Goesmann A."/>
            <person name="Oehm S."/>
            <person name="Puhler A."/>
            <person name="Merkl R."/>
            <person name="Vorwerk S."/>
            <person name="Glaser P."/>
            <person name="Garrido P."/>
            <person name="Rusniok C."/>
            <person name="Buchrieser C."/>
            <person name="Goebel W."/>
            <person name="Chakraborty T."/>
        </authorList>
    </citation>
    <scope>NUCLEOTIDE SEQUENCE [LARGE SCALE GENOMIC DNA]</scope>
    <source>
        <strain>CLIP80459</strain>
    </source>
</reference>
<accession>C1KYF4</accession>
<keyword id="KW-0067">ATP-binding</keyword>
<keyword id="KW-0173">Coenzyme A biosynthesis</keyword>
<keyword id="KW-0963">Cytoplasm</keyword>
<keyword id="KW-0418">Kinase</keyword>
<keyword id="KW-0479">Metal-binding</keyword>
<keyword id="KW-0547">Nucleotide-binding</keyword>
<keyword id="KW-0630">Potassium</keyword>
<keyword id="KW-0808">Transferase</keyword>
<comment type="function">
    <text evidence="1">Catalyzes the phosphorylation of pantothenate (Pan), the first step in CoA biosynthesis.</text>
</comment>
<comment type="catalytic activity">
    <reaction evidence="1">
        <text>(R)-pantothenate + ATP = (R)-4'-phosphopantothenate + ADP + H(+)</text>
        <dbReference type="Rhea" id="RHEA:16373"/>
        <dbReference type="ChEBI" id="CHEBI:10986"/>
        <dbReference type="ChEBI" id="CHEBI:15378"/>
        <dbReference type="ChEBI" id="CHEBI:29032"/>
        <dbReference type="ChEBI" id="CHEBI:30616"/>
        <dbReference type="ChEBI" id="CHEBI:456216"/>
        <dbReference type="EC" id="2.7.1.33"/>
    </reaction>
</comment>
<comment type="cofactor">
    <cofactor evidence="1">
        <name>NH4(+)</name>
        <dbReference type="ChEBI" id="CHEBI:28938"/>
    </cofactor>
    <cofactor evidence="1">
        <name>K(+)</name>
        <dbReference type="ChEBI" id="CHEBI:29103"/>
    </cofactor>
    <text evidence="1">A monovalent cation. Ammonium or potassium.</text>
</comment>
<comment type="pathway">
    <text evidence="1">Cofactor biosynthesis; coenzyme A biosynthesis; CoA from (R)-pantothenate: step 1/5.</text>
</comment>
<comment type="subunit">
    <text evidence="1">Homodimer.</text>
</comment>
<comment type="subcellular location">
    <subcellularLocation>
        <location evidence="1">Cytoplasm</location>
    </subcellularLocation>
</comment>
<comment type="similarity">
    <text evidence="1">Belongs to the type III pantothenate kinase family.</text>
</comment>
<protein>
    <recommendedName>
        <fullName evidence="1">Type III pantothenate kinase</fullName>
        <ecNumber evidence="1">2.7.1.33</ecNumber>
    </recommendedName>
    <alternativeName>
        <fullName evidence="1">PanK-III</fullName>
    </alternativeName>
    <alternativeName>
        <fullName evidence="1">Pantothenic acid kinase</fullName>
    </alternativeName>
</protein>
<gene>
    <name evidence="1" type="primary">coaX</name>
    <name type="ordered locus">Lm4b_00219</name>
</gene>
<organism>
    <name type="scientific">Listeria monocytogenes serotype 4b (strain CLIP80459)</name>
    <dbReference type="NCBI Taxonomy" id="568819"/>
    <lineage>
        <taxon>Bacteria</taxon>
        <taxon>Bacillati</taxon>
        <taxon>Bacillota</taxon>
        <taxon>Bacilli</taxon>
        <taxon>Bacillales</taxon>
        <taxon>Listeriaceae</taxon>
        <taxon>Listeria</taxon>
    </lineage>
</organism>
<dbReference type="EC" id="2.7.1.33" evidence="1"/>
<dbReference type="EMBL" id="FM242711">
    <property type="protein sequence ID" value="CAS04009.1"/>
    <property type="molecule type" value="Genomic_DNA"/>
</dbReference>
<dbReference type="RefSeq" id="WP_003725746.1">
    <property type="nucleotide sequence ID" value="NC_012488.1"/>
</dbReference>
<dbReference type="SMR" id="C1KYF4"/>
<dbReference type="KEGG" id="lmc:Lm4b_00219"/>
<dbReference type="HOGENOM" id="CLU_066627_1_0_9"/>
<dbReference type="UniPathway" id="UPA00241">
    <property type="reaction ID" value="UER00352"/>
</dbReference>
<dbReference type="GO" id="GO:0005737">
    <property type="term" value="C:cytoplasm"/>
    <property type="evidence" value="ECO:0007669"/>
    <property type="project" value="UniProtKB-SubCell"/>
</dbReference>
<dbReference type="GO" id="GO:0005524">
    <property type="term" value="F:ATP binding"/>
    <property type="evidence" value="ECO:0007669"/>
    <property type="project" value="UniProtKB-UniRule"/>
</dbReference>
<dbReference type="GO" id="GO:0046872">
    <property type="term" value="F:metal ion binding"/>
    <property type="evidence" value="ECO:0007669"/>
    <property type="project" value="UniProtKB-KW"/>
</dbReference>
<dbReference type="GO" id="GO:0004594">
    <property type="term" value="F:pantothenate kinase activity"/>
    <property type="evidence" value="ECO:0007669"/>
    <property type="project" value="UniProtKB-UniRule"/>
</dbReference>
<dbReference type="GO" id="GO:0015937">
    <property type="term" value="P:coenzyme A biosynthetic process"/>
    <property type="evidence" value="ECO:0007669"/>
    <property type="project" value="UniProtKB-UniRule"/>
</dbReference>
<dbReference type="CDD" id="cd24015">
    <property type="entry name" value="ASKHA_NBD_PanK-III"/>
    <property type="match status" value="1"/>
</dbReference>
<dbReference type="Gene3D" id="3.30.420.40">
    <property type="match status" value="2"/>
</dbReference>
<dbReference type="HAMAP" id="MF_01274">
    <property type="entry name" value="Pantothen_kinase_3"/>
    <property type="match status" value="1"/>
</dbReference>
<dbReference type="InterPro" id="IPR043129">
    <property type="entry name" value="ATPase_NBD"/>
</dbReference>
<dbReference type="InterPro" id="IPR004619">
    <property type="entry name" value="Type_III_PanK"/>
</dbReference>
<dbReference type="NCBIfam" id="TIGR00671">
    <property type="entry name" value="baf"/>
    <property type="match status" value="1"/>
</dbReference>
<dbReference type="NCBIfam" id="NF009843">
    <property type="entry name" value="PRK13318.1-1"/>
    <property type="match status" value="1"/>
</dbReference>
<dbReference type="NCBIfam" id="NF009847">
    <property type="entry name" value="PRK13318.1-5"/>
    <property type="match status" value="1"/>
</dbReference>
<dbReference type="NCBIfam" id="NF009848">
    <property type="entry name" value="PRK13318.1-6"/>
    <property type="match status" value="1"/>
</dbReference>
<dbReference type="NCBIfam" id="NF009855">
    <property type="entry name" value="PRK13321.1"/>
    <property type="match status" value="1"/>
</dbReference>
<dbReference type="PANTHER" id="PTHR34265">
    <property type="entry name" value="TYPE III PANTOTHENATE KINASE"/>
    <property type="match status" value="1"/>
</dbReference>
<dbReference type="PANTHER" id="PTHR34265:SF1">
    <property type="entry name" value="TYPE III PANTOTHENATE KINASE"/>
    <property type="match status" value="1"/>
</dbReference>
<dbReference type="Pfam" id="PF03309">
    <property type="entry name" value="Pan_kinase"/>
    <property type="match status" value="1"/>
</dbReference>
<dbReference type="SUPFAM" id="SSF53067">
    <property type="entry name" value="Actin-like ATPase domain"/>
    <property type="match status" value="2"/>
</dbReference>
<feature type="chain" id="PRO_1000214192" description="Type III pantothenate kinase">
    <location>
        <begin position="1"/>
        <end position="259"/>
    </location>
</feature>
<feature type="active site" description="Proton acceptor" evidence="1">
    <location>
        <position position="109"/>
    </location>
</feature>
<feature type="binding site" evidence="1">
    <location>
        <begin position="6"/>
        <end position="13"/>
    </location>
    <ligand>
        <name>ATP</name>
        <dbReference type="ChEBI" id="CHEBI:30616"/>
    </ligand>
</feature>
<feature type="binding site" evidence="1">
    <location>
        <begin position="107"/>
        <end position="110"/>
    </location>
    <ligand>
        <name>substrate</name>
    </ligand>
</feature>
<feature type="binding site" evidence="1">
    <location>
        <position position="129"/>
    </location>
    <ligand>
        <name>K(+)</name>
        <dbReference type="ChEBI" id="CHEBI:29103"/>
    </ligand>
</feature>
<feature type="binding site" evidence="1">
    <location>
        <position position="132"/>
    </location>
    <ligand>
        <name>ATP</name>
        <dbReference type="ChEBI" id="CHEBI:30616"/>
    </ligand>
</feature>
<feature type="binding site" evidence="1">
    <location>
        <position position="184"/>
    </location>
    <ligand>
        <name>substrate</name>
    </ligand>
</feature>
<name>COAX_LISMC</name>
<sequence>MILVIDVGNTNCTVGVYEKQKLLKHWRMTTDRHRTSDELGMTVLNFFSYANLTPSDIQGIIISSVVPPIMHAMETMCVRYFNIRPLIVGPGIKTGLNLKVDNPREIGSDRIVNAVAASEEYGTPVIVVDFGTATTFCYIDESGVYQGGAIAPGIMISTEALYNRAAKLPRVDIAESNQIIGKSTVASMQAGIFYGFVGQCEGIIAEIKKQSNASPVVVATGGLARMITEKSSAVDILDPFLTLKGLELLYRRNKPTTEK</sequence>